<dbReference type="EC" id="4.98.1.1" evidence="1"/>
<dbReference type="EMBL" id="BX571965">
    <property type="protein sequence ID" value="CAH36841.1"/>
    <property type="molecule type" value="Genomic_DNA"/>
</dbReference>
<dbReference type="RefSeq" id="YP_109425.1">
    <property type="nucleotide sequence ID" value="NC_006350.1"/>
</dbReference>
<dbReference type="SMR" id="Q63R43"/>
<dbReference type="STRING" id="272560.BPSL2831"/>
<dbReference type="KEGG" id="bps:BPSL2831"/>
<dbReference type="PATRIC" id="fig|272560.6.peg.3230"/>
<dbReference type="eggNOG" id="COG0276">
    <property type="taxonomic scope" value="Bacteria"/>
</dbReference>
<dbReference type="UniPathway" id="UPA00252">
    <property type="reaction ID" value="UER00325"/>
</dbReference>
<dbReference type="Proteomes" id="UP000000605">
    <property type="component" value="Chromosome 1"/>
</dbReference>
<dbReference type="GO" id="GO:0005737">
    <property type="term" value="C:cytoplasm"/>
    <property type="evidence" value="ECO:0007669"/>
    <property type="project" value="UniProtKB-SubCell"/>
</dbReference>
<dbReference type="GO" id="GO:0004325">
    <property type="term" value="F:ferrochelatase activity"/>
    <property type="evidence" value="ECO:0007669"/>
    <property type="project" value="UniProtKB-UniRule"/>
</dbReference>
<dbReference type="GO" id="GO:0046872">
    <property type="term" value="F:metal ion binding"/>
    <property type="evidence" value="ECO:0007669"/>
    <property type="project" value="UniProtKB-KW"/>
</dbReference>
<dbReference type="GO" id="GO:0006783">
    <property type="term" value="P:heme biosynthetic process"/>
    <property type="evidence" value="ECO:0007669"/>
    <property type="project" value="UniProtKB-UniRule"/>
</dbReference>
<dbReference type="CDD" id="cd00419">
    <property type="entry name" value="Ferrochelatase_C"/>
    <property type="match status" value="1"/>
</dbReference>
<dbReference type="CDD" id="cd03411">
    <property type="entry name" value="Ferrochelatase_N"/>
    <property type="match status" value="1"/>
</dbReference>
<dbReference type="FunFam" id="3.40.50.1400:FF:000002">
    <property type="entry name" value="Ferrochelatase"/>
    <property type="match status" value="1"/>
</dbReference>
<dbReference type="Gene3D" id="3.40.50.1400">
    <property type="match status" value="2"/>
</dbReference>
<dbReference type="HAMAP" id="MF_00323">
    <property type="entry name" value="Ferrochelatase"/>
    <property type="match status" value="1"/>
</dbReference>
<dbReference type="InterPro" id="IPR001015">
    <property type="entry name" value="Ferrochelatase"/>
</dbReference>
<dbReference type="InterPro" id="IPR019772">
    <property type="entry name" value="Ferrochelatase_AS"/>
</dbReference>
<dbReference type="InterPro" id="IPR033644">
    <property type="entry name" value="Ferrochelatase_C"/>
</dbReference>
<dbReference type="InterPro" id="IPR033659">
    <property type="entry name" value="Ferrochelatase_N"/>
</dbReference>
<dbReference type="NCBIfam" id="TIGR00109">
    <property type="entry name" value="hemH"/>
    <property type="match status" value="1"/>
</dbReference>
<dbReference type="PANTHER" id="PTHR11108">
    <property type="entry name" value="FERROCHELATASE"/>
    <property type="match status" value="1"/>
</dbReference>
<dbReference type="PANTHER" id="PTHR11108:SF1">
    <property type="entry name" value="FERROCHELATASE, MITOCHONDRIAL"/>
    <property type="match status" value="1"/>
</dbReference>
<dbReference type="Pfam" id="PF00762">
    <property type="entry name" value="Ferrochelatase"/>
    <property type="match status" value="1"/>
</dbReference>
<dbReference type="SUPFAM" id="SSF53800">
    <property type="entry name" value="Chelatase"/>
    <property type="match status" value="1"/>
</dbReference>
<dbReference type="PROSITE" id="PS00534">
    <property type="entry name" value="FERROCHELATASE"/>
    <property type="match status" value="1"/>
</dbReference>
<evidence type="ECO:0000255" key="1">
    <source>
        <dbReference type="HAMAP-Rule" id="MF_00323"/>
    </source>
</evidence>
<sequence length="367" mass="40571">MSFDSVPRHALSMRFDLEPPSHASAAHRVAVLLVNLGTPDAPTPRAVRRYLAQFLSDPRVVEIPQLVWQVILRTLILPLRGRASAKKYAAVWLPEGSPLRVYTERQVESVKPLFAANGYRVIVDYAMRYGTPSIADVLAQLKRAGAERVLLLPMYPQYSSSTTATAFDAAFAALGRMRNQPEVRTVRHYADHPAYIHALAEQVRQYWAAHGRPAFDAGDKLVLSFHGVPKRTLDLGDPYHDQCQQTAALLMSALGLTTFECRVTFQSRFGKAEWLQPYTAPTLKELGAAGVRRADVFCPGFTADCLETIEEIGIEVRDEFVHGGGKEFHRIPCLNASPAWIAALGEIAAENLQGWPVRVAMAPEAVS</sequence>
<name>HEMH_BURPS</name>
<protein>
    <recommendedName>
        <fullName evidence="1">Ferrochelatase</fullName>
        <ecNumber evidence="1">4.98.1.1</ecNumber>
    </recommendedName>
    <alternativeName>
        <fullName evidence="1">Heme synthase</fullName>
    </alternativeName>
    <alternativeName>
        <fullName evidence="1">Protoheme ferro-lyase</fullName>
    </alternativeName>
</protein>
<organism>
    <name type="scientific">Burkholderia pseudomallei (strain K96243)</name>
    <dbReference type="NCBI Taxonomy" id="272560"/>
    <lineage>
        <taxon>Bacteria</taxon>
        <taxon>Pseudomonadati</taxon>
        <taxon>Pseudomonadota</taxon>
        <taxon>Betaproteobacteria</taxon>
        <taxon>Burkholderiales</taxon>
        <taxon>Burkholderiaceae</taxon>
        <taxon>Burkholderia</taxon>
        <taxon>pseudomallei group</taxon>
    </lineage>
</organism>
<feature type="chain" id="PRO_0000175124" description="Ferrochelatase">
    <location>
        <begin position="1"/>
        <end position="367"/>
    </location>
</feature>
<feature type="binding site" evidence="1">
    <location>
        <position position="226"/>
    </location>
    <ligand>
        <name>Fe cation</name>
        <dbReference type="ChEBI" id="CHEBI:24875"/>
    </ligand>
</feature>
<feature type="binding site" evidence="1">
    <location>
        <position position="307"/>
    </location>
    <ligand>
        <name>Fe cation</name>
        <dbReference type="ChEBI" id="CHEBI:24875"/>
    </ligand>
</feature>
<accession>Q63R43</accession>
<gene>
    <name evidence="1" type="primary">hemH</name>
    <name type="ordered locus">BPSL2831</name>
</gene>
<keyword id="KW-0963">Cytoplasm</keyword>
<keyword id="KW-0350">Heme biosynthesis</keyword>
<keyword id="KW-0408">Iron</keyword>
<keyword id="KW-0456">Lyase</keyword>
<keyword id="KW-0479">Metal-binding</keyword>
<keyword id="KW-0627">Porphyrin biosynthesis</keyword>
<keyword id="KW-1185">Reference proteome</keyword>
<proteinExistence type="inferred from homology"/>
<reference key="1">
    <citation type="journal article" date="2004" name="Proc. Natl. Acad. Sci. U.S.A.">
        <title>Genomic plasticity of the causative agent of melioidosis, Burkholderia pseudomallei.</title>
        <authorList>
            <person name="Holden M.T.G."/>
            <person name="Titball R.W."/>
            <person name="Peacock S.J."/>
            <person name="Cerdeno-Tarraga A.-M."/>
            <person name="Atkins T."/>
            <person name="Crossman L.C."/>
            <person name="Pitt T."/>
            <person name="Churcher C."/>
            <person name="Mungall K.L."/>
            <person name="Bentley S.D."/>
            <person name="Sebaihia M."/>
            <person name="Thomson N.R."/>
            <person name="Bason N."/>
            <person name="Beacham I.R."/>
            <person name="Brooks K."/>
            <person name="Brown K.A."/>
            <person name="Brown N.F."/>
            <person name="Challis G.L."/>
            <person name="Cherevach I."/>
            <person name="Chillingworth T."/>
            <person name="Cronin A."/>
            <person name="Crossett B."/>
            <person name="Davis P."/>
            <person name="DeShazer D."/>
            <person name="Feltwell T."/>
            <person name="Fraser A."/>
            <person name="Hance Z."/>
            <person name="Hauser H."/>
            <person name="Holroyd S."/>
            <person name="Jagels K."/>
            <person name="Keith K.E."/>
            <person name="Maddison M."/>
            <person name="Moule S."/>
            <person name="Price C."/>
            <person name="Quail M.A."/>
            <person name="Rabbinowitsch E."/>
            <person name="Rutherford K."/>
            <person name="Sanders M."/>
            <person name="Simmonds M."/>
            <person name="Songsivilai S."/>
            <person name="Stevens K."/>
            <person name="Tumapa S."/>
            <person name="Vesaratchavest M."/>
            <person name="Whitehead S."/>
            <person name="Yeats C."/>
            <person name="Barrell B.G."/>
            <person name="Oyston P.C.F."/>
            <person name="Parkhill J."/>
        </authorList>
    </citation>
    <scope>NUCLEOTIDE SEQUENCE [LARGE SCALE GENOMIC DNA]</scope>
    <source>
        <strain>K96243</strain>
    </source>
</reference>
<comment type="function">
    <text evidence="1">Catalyzes the ferrous insertion into protoporphyrin IX.</text>
</comment>
<comment type="catalytic activity">
    <reaction evidence="1">
        <text>heme b + 2 H(+) = protoporphyrin IX + Fe(2+)</text>
        <dbReference type="Rhea" id="RHEA:22584"/>
        <dbReference type="ChEBI" id="CHEBI:15378"/>
        <dbReference type="ChEBI" id="CHEBI:29033"/>
        <dbReference type="ChEBI" id="CHEBI:57306"/>
        <dbReference type="ChEBI" id="CHEBI:60344"/>
        <dbReference type="EC" id="4.98.1.1"/>
    </reaction>
</comment>
<comment type="pathway">
    <text evidence="1">Porphyrin-containing compound metabolism; protoheme biosynthesis; protoheme from protoporphyrin-IX: step 1/1.</text>
</comment>
<comment type="subcellular location">
    <subcellularLocation>
        <location evidence="1">Cytoplasm</location>
    </subcellularLocation>
</comment>
<comment type="similarity">
    <text evidence="1">Belongs to the ferrochelatase family.</text>
</comment>